<evidence type="ECO:0000255" key="1">
    <source>
        <dbReference type="HAMAP-Rule" id="MF_00478"/>
    </source>
</evidence>
<organism>
    <name type="scientific">Cronobacter sakazakii (strain ATCC BAA-894)</name>
    <name type="common">Enterobacter sakazakii</name>
    <dbReference type="NCBI Taxonomy" id="290339"/>
    <lineage>
        <taxon>Bacteria</taxon>
        <taxon>Pseudomonadati</taxon>
        <taxon>Pseudomonadota</taxon>
        <taxon>Gammaproteobacteria</taxon>
        <taxon>Enterobacterales</taxon>
        <taxon>Enterobacteriaceae</taxon>
        <taxon>Cronobacter</taxon>
    </lineage>
</organism>
<proteinExistence type="inferred from homology"/>
<dbReference type="EC" id="7.-.-.-" evidence="1"/>
<dbReference type="EMBL" id="CP000783">
    <property type="protein sequence ID" value="ABU77244.1"/>
    <property type="molecule type" value="Genomic_DNA"/>
</dbReference>
<dbReference type="RefSeq" id="WP_004386086.1">
    <property type="nucleotide sequence ID" value="NC_009778.1"/>
</dbReference>
<dbReference type="SMR" id="A7MML2"/>
<dbReference type="KEGG" id="esa:ESA_01991"/>
<dbReference type="HOGENOM" id="CLU_046659_1_0_6"/>
<dbReference type="Proteomes" id="UP000000260">
    <property type="component" value="Chromosome"/>
</dbReference>
<dbReference type="GO" id="GO:0005886">
    <property type="term" value="C:plasma membrane"/>
    <property type="evidence" value="ECO:0007669"/>
    <property type="project" value="UniProtKB-SubCell"/>
</dbReference>
<dbReference type="GO" id="GO:0022900">
    <property type="term" value="P:electron transport chain"/>
    <property type="evidence" value="ECO:0007669"/>
    <property type="project" value="UniProtKB-UniRule"/>
</dbReference>
<dbReference type="HAMAP" id="MF_00478">
    <property type="entry name" value="RsxE_RnfE"/>
    <property type="match status" value="1"/>
</dbReference>
<dbReference type="InterPro" id="IPR003667">
    <property type="entry name" value="NqrDE/RnfAE"/>
</dbReference>
<dbReference type="InterPro" id="IPR010968">
    <property type="entry name" value="RnfE"/>
</dbReference>
<dbReference type="NCBIfam" id="NF009070">
    <property type="entry name" value="PRK12405.1"/>
    <property type="match status" value="1"/>
</dbReference>
<dbReference type="NCBIfam" id="TIGR01948">
    <property type="entry name" value="rnfE"/>
    <property type="match status" value="1"/>
</dbReference>
<dbReference type="PANTHER" id="PTHR30586">
    <property type="entry name" value="ELECTRON TRANSPORT COMPLEX PROTEIN RNFE"/>
    <property type="match status" value="1"/>
</dbReference>
<dbReference type="PANTHER" id="PTHR30586:SF0">
    <property type="entry name" value="ION-TRANSLOCATING OXIDOREDUCTASE COMPLEX SUBUNIT E"/>
    <property type="match status" value="1"/>
</dbReference>
<dbReference type="Pfam" id="PF02508">
    <property type="entry name" value="Rnf-Nqr"/>
    <property type="match status" value="1"/>
</dbReference>
<dbReference type="PIRSF" id="PIRSF006102">
    <property type="entry name" value="NQR_DE"/>
    <property type="match status" value="1"/>
</dbReference>
<comment type="function">
    <text evidence="1">Part of a membrane-bound complex that couples electron transfer with translocation of ions across the membrane.</text>
</comment>
<comment type="subunit">
    <text evidence="1">The complex is composed of six subunits: RnfA, RnfB, RnfC, RnfD, RnfE and RnfG.</text>
</comment>
<comment type="subcellular location">
    <subcellularLocation>
        <location evidence="1">Cell inner membrane</location>
        <topology evidence="1">Multi-pass membrane protein</topology>
    </subcellularLocation>
</comment>
<comment type="similarity">
    <text evidence="1">Belongs to the NqrDE/RnfAE family.</text>
</comment>
<accession>A7MML2</accession>
<gene>
    <name evidence="1" type="primary">rnfE</name>
    <name type="ordered locus">ESA_01991</name>
</gene>
<reference key="1">
    <citation type="journal article" date="2010" name="PLoS ONE">
        <title>Genome sequence of Cronobacter sakazakii BAA-894 and comparative genomic hybridization analysis with other Cronobacter species.</title>
        <authorList>
            <person name="Kucerova E."/>
            <person name="Clifton S.W."/>
            <person name="Xia X.Q."/>
            <person name="Long F."/>
            <person name="Porwollik S."/>
            <person name="Fulton L."/>
            <person name="Fronick C."/>
            <person name="Minx P."/>
            <person name="Kyung K."/>
            <person name="Warren W."/>
            <person name="Fulton R."/>
            <person name="Feng D."/>
            <person name="Wollam A."/>
            <person name="Shah N."/>
            <person name="Bhonagiri V."/>
            <person name="Nash W.E."/>
            <person name="Hallsworth-Pepin K."/>
            <person name="Wilson R.K."/>
            <person name="McClelland M."/>
            <person name="Forsythe S.J."/>
        </authorList>
    </citation>
    <scope>NUCLEOTIDE SEQUENCE [LARGE SCALE GENOMIC DNA]</scope>
    <source>
        <strain>ATCC BAA-894</strain>
    </source>
</reference>
<name>RNFE_CROS8</name>
<protein>
    <recommendedName>
        <fullName evidence="1">Ion-translocating oxidoreductase complex subunit E</fullName>
        <ecNumber evidence="1">7.-.-.-</ecNumber>
    </recommendedName>
    <alternativeName>
        <fullName evidence="1">Rnf electron transport complex subunit E</fullName>
    </alternativeName>
</protein>
<keyword id="KW-0997">Cell inner membrane</keyword>
<keyword id="KW-1003">Cell membrane</keyword>
<keyword id="KW-0249">Electron transport</keyword>
<keyword id="KW-0472">Membrane</keyword>
<keyword id="KW-1185">Reference proteome</keyword>
<keyword id="KW-1278">Translocase</keyword>
<keyword id="KW-0812">Transmembrane</keyword>
<keyword id="KW-1133">Transmembrane helix</keyword>
<keyword id="KW-0813">Transport</keyword>
<feature type="chain" id="PRO_1000014090" description="Ion-translocating oxidoreductase complex subunit E">
    <location>
        <begin position="1"/>
        <end position="228"/>
    </location>
</feature>
<feature type="transmembrane region" description="Helical" evidence="1">
    <location>
        <begin position="18"/>
        <end position="38"/>
    </location>
</feature>
<feature type="transmembrane region" description="Helical" evidence="1">
    <location>
        <begin position="69"/>
        <end position="89"/>
    </location>
</feature>
<feature type="transmembrane region" description="Helical" evidence="1">
    <location>
        <begin position="92"/>
        <end position="112"/>
    </location>
</feature>
<feature type="transmembrane region" description="Helical" evidence="1">
    <location>
        <begin position="125"/>
        <end position="145"/>
    </location>
</feature>
<feature type="transmembrane region" description="Helical" evidence="1">
    <location>
        <begin position="182"/>
        <end position="202"/>
    </location>
</feature>
<sequence>MNDVKSILVNGLWKNNSALVQLLGMCPLLAVTSTATNALGLGLATTLVLTLTNASISAFRRWMPGEIRIPIYVMIIAAVVSIVQMLINAYAFGLYQSLGIFIPLIVTNCIVVGRAEAFAAKNGPLLSALDGFAIGLGATGAMFVLGSLREILGNGTLFDGADGLLGSWARVLRIEVFHTDTPFLLAMLPPGAFIGLGMMLAVKYLIDERMKRRAAKPVVVEAAAEKAS</sequence>